<name>PPNP_LEPBL</name>
<protein>
    <recommendedName>
        <fullName evidence="1">Pyrimidine/purine nucleoside phosphorylase</fullName>
        <ecNumber evidence="1">2.4.2.1</ecNumber>
        <ecNumber evidence="1">2.4.2.2</ecNumber>
    </recommendedName>
    <alternativeName>
        <fullName evidence="1">Adenosine phosphorylase</fullName>
    </alternativeName>
    <alternativeName>
        <fullName evidence="1">Cytidine phosphorylase</fullName>
    </alternativeName>
    <alternativeName>
        <fullName evidence="1">Guanosine phosphorylase</fullName>
    </alternativeName>
    <alternativeName>
        <fullName evidence="1">Inosine phosphorylase</fullName>
    </alternativeName>
    <alternativeName>
        <fullName evidence="1">Thymidine phosphorylase</fullName>
    </alternativeName>
    <alternativeName>
        <fullName evidence="1">Uridine phosphorylase</fullName>
    </alternativeName>
    <alternativeName>
        <fullName evidence="1">Xanthosine phosphorylase</fullName>
    </alternativeName>
</protein>
<keyword id="KW-0328">Glycosyltransferase</keyword>
<keyword id="KW-0808">Transferase</keyword>
<dbReference type="EC" id="2.4.2.1" evidence="1"/>
<dbReference type="EC" id="2.4.2.2" evidence="1"/>
<dbReference type="EMBL" id="CP000348">
    <property type="protein sequence ID" value="ABJ77946.1"/>
    <property type="molecule type" value="Genomic_DNA"/>
</dbReference>
<dbReference type="RefSeq" id="WP_011669374.1">
    <property type="nucleotide sequence ID" value="NC_008508.1"/>
</dbReference>
<dbReference type="SMR" id="Q055P9"/>
<dbReference type="KEGG" id="lbl:LBL_0336"/>
<dbReference type="HOGENOM" id="CLU_157874_1_0_12"/>
<dbReference type="GO" id="GO:0005829">
    <property type="term" value="C:cytosol"/>
    <property type="evidence" value="ECO:0007669"/>
    <property type="project" value="TreeGrafter"/>
</dbReference>
<dbReference type="GO" id="GO:0047975">
    <property type="term" value="F:guanosine phosphorylase activity"/>
    <property type="evidence" value="ECO:0007669"/>
    <property type="project" value="UniProtKB-EC"/>
</dbReference>
<dbReference type="GO" id="GO:0004731">
    <property type="term" value="F:purine-nucleoside phosphorylase activity"/>
    <property type="evidence" value="ECO:0007669"/>
    <property type="project" value="UniProtKB-UniRule"/>
</dbReference>
<dbReference type="GO" id="GO:0009032">
    <property type="term" value="F:thymidine phosphorylase activity"/>
    <property type="evidence" value="ECO:0007669"/>
    <property type="project" value="UniProtKB-EC"/>
</dbReference>
<dbReference type="GO" id="GO:0004850">
    <property type="term" value="F:uridine phosphorylase activity"/>
    <property type="evidence" value="ECO:0007669"/>
    <property type="project" value="UniProtKB-EC"/>
</dbReference>
<dbReference type="CDD" id="cd20296">
    <property type="entry name" value="cupin_PpnP-like"/>
    <property type="match status" value="1"/>
</dbReference>
<dbReference type="FunFam" id="2.60.120.10:FF:000016">
    <property type="entry name" value="Pyrimidine/purine nucleoside phosphorylase"/>
    <property type="match status" value="1"/>
</dbReference>
<dbReference type="Gene3D" id="2.60.120.10">
    <property type="entry name" value="Jelly Rolls"/>
    <property type="match status" value="1"/>
</dbReference>
<dbReference type="HAMAP" id="MF_01537">
    <property type="entry name" value="Nucleos_phosphorylase_PpnP"/>
    <property type="match status" value="1"/>
</dbReference>
<dbReference type="InterPro" id="IPR009664">
    <property type="entry name" value="Ppnp"/>
</dbReference>
<dbReference type="InterPro" id="IPR014710">
    <property type="entry name" value="RmlC-like_jellyroll"/>
</dbReference>
<dbReference type="InterPro" id="IPR011051">
    <property type="entry name" value="RmlC_Cupin_sf"/>
</dbReference>
<dbReference type="PANTHER" id="PTHR36540">
    <property type="entry name" value="PYRIMIDINE/PURINE NUCLEOSIDE PHOSPHORYLASE"/>
    <property type="match status" value="1"/>
</dbReference>
<dbReference type="PANTHER" id="PTHR36540:SF1">
    <property type="entry name" value="PYRIMIDINE_PURINE NUCLEOSIDE PHOSPHORYLASE"/>
    <property type="match status" value="1"/>
</dbReference>
<dbReference type="Pfam" id="PF06865">
    <property type="entry name" value="Ppnp"/>
    <property type="match status" value="1"/>
</dbReference>
<dbReference type="SUPFAM" id="SSF51182">
    <property type="entry name" value="RmlC-like cupins"/>
    <property type="match status" value="1"/>
</dbReference>
<proteinExistence type="inferred from homology"/>
<evidence type="ECO:0000255" key="1">
    <source>
        <dbReference type="HAMAP-Rule" id="MF_01537"/>
    </source>
</evidence>
<comment type="function">
    <text evidence="1">Catalyzes the phosphorolysis of diverse nucleosides, yielding D-ribose 1-phosphate and the respective free bases. Can use uridine, adenosine, guanosine, cytidine, thymidine, inosine and xanthosine as substrates. Also catalyzes the reverse reactions.</text>
</comment>
<comment type="catalytic activity">
    <reaction evidence="1">
        <text>a purine D-ribonucleoside + phosphate = a purine nucleobase + alpha-D-ribose 1-phosphate</text>
        <dbReference type="Rhea" id="RHEA:19805"/>
        <dbReference type="ChEBI" id="CHEBI:26386"/>
        <dbReference type="ChEBI" id="CHEBI:43474"/>
        <dbReference type="ChEBI" id="CHEBI:57720"/>
        <dbReference type="ChEBI" id="CHEBI:142355"/>
        <dbReference type="EC" id="2.4.2.1"/>
    </reaction>
</comment>
<comment type="catalytic activity">
    <reaction evidence="1">
        <text>adenosine + phosphate = alpha-D-ribose 1-phosphate + adenine</text>
        <dbReference type="Rhea" id="RHEA:27642"/>
        <dbReference type="ChEBI" id="CHEBI:16335"/>
        <dbReference type="ChEBI" id="CHEBI:16708"/>
        <dbReference type="ChEBI" id="CHEBI:43474"/>
        <dbReference type="ChEBI" id="CHEBI:57720"/>
        <dbReference type="EC" id="2.4.2.1"/>
    </reaction>
</comment>
<comment type="catalytic activity">
    <reaction evidence="1">
        <text>cytidine + phosphate = cytosine + alpha-D-ribose 1-phosphate</text>
        <dbReference type="Rhea" id="RHEA:52540"/>
        <dbReference type="ChEBI" id="CHEBI:16040"/>
        <dbReference type="ChEBI" id="CHEBI:17562"/>
        <dbReference type="ChEBI" id="CHEBI:43474"/>
        <dbReference type="ChEBI" id="CHEBI:57720"/>
        <dbReference type="EC" id="2.4.2.2"/>
    </reaction>
</comment>
<comment type="catalytic activity">
    <reaction evidence="1">
        <text>guanosine + phosphate = alpha-D-ribose 1-phosphate + guanine</text>
        <dbReference type="Rhea" id="RHEA:13233"/>
        <dbReference type="ChEBI" id="CHEBI:16235"/>
        <dbReference type="ChEBI" id="CHEBI:16750"/>
        <dbReference type="ChEBI" id="CHEBI:43474"/>
        <dbReference type="ChEBI" id="CHEBI:57720"/>
        <dbReference type="EC" id="2.4.2.1"/>
    </reaction>
</comment>
<comment type="catalytic activity">
    <reaction evidence="1">
        <text>inosine + phosphate = alpha-D-ribose 1-phosphate + hypoxanthine</text>
        <dbReference type="Rhea" id="RHEA:27646"/>
        <dbReference type="ChEBI" id="CHEBI:17368"/>
        <dbReference type="ChEBI" id="CHEBI:17596"/>
        <dbReference type="ChEBI" id="CHEBI:43474"/>
        <dbReference type="ChEBI" id="CHEBI:57720"/>
        <dbReference type="EC" id="2.4.2.1"/>
    </reaction>
</comment>
<comment type="catalytic activity">
    <reaction evidence="1">
        <text>thymidine + phosphate = 2-deoxy-alpha-D-ribose 1-phosphate + thymine</text>
        <dbReference type="Rhea" id="RHEA:16037"/>
        <dbReference type="ChEBI" id="CHEBI:17748"/>
        <dbReference type="ChEBI" id="CHEBI:17821"/>
        <dbReference type="ChEBI" id="CHEBI:43474"/>
        <dbReference type="ChEBI" id="CHEBI:57259"/>
        <dbReference type="EC" id="2.4.2.2"/>
    </reaction>
</comment>
<comment type="catalytic activity">
    <reaction evidence="1">
        <text>uridine + phosphate = alpha-D-ribose 1-phosphate + uracil</text>
        <dbReference type="Rhea" id="RHEA:24388"/>
        <dbReference type="ChEBI" id="CHEBI:16704"/>
        <dbReference type="ChEBI" id="CHEBI:17568"/>
        <dbReference type="ChEBI" id="CHEBI:43474"/>
        <dbReference type="ChEBI" id="CHEBI:57720"/>
        <dbReference type="EC" id="2.4.2.2"/>
    </reaction>
</comment>
<comment type="catalytic activity">
    <reaction evidence="1">
        <text>xanthosine + phosphate = alpha-D-ribose 1-phosphate + xanthine</text>
        <dbReference type="Rhea" id="RHEA:27638"/>
        <dbReference type="ChEBI" id="CHEBI:17712"/>
        <dbReference type="ChEBI" id="CHEBI:18107"/>
        <dbReference type="ChEBI" id="CHEBI:43474"/>
        <dbReference type="ChEBI" id="CHEBI:57720"/>
        <dbReference type="EC" id="2.4.2.1"/>
    </reaction>
</comment>
<comment type="similarity">
    <text evidence="1">Belongs to the nucleoside phosphorylase PpnP family.</text>
</comment>
<accession>Q055P9</accession>
<gene>
    <name evidence="1" type="primary">ppnP</name>
    <name type="ordered locus">LBL_0336</name>
</gene>
<organism>
    <name type="scientific">Leptospira borgpetersenii serovar Hardjo-bovis (strain L550)</name>
    <dbReference type="NCBI Taxonomy" id="355276"/>
    <lineage>
        <taxon>Bacteria</taxon>
        <taxon>Pseudomonadati</taxon>
        <taxon>Spirochaetota</taxon>
        <taxon>Spirochaetia</taxon>
        <taxon>Leptospirales</taxon>
        <taxon>Leptospiraceae</taxon>
        <taxon>Leptospira</taxon>
    </lineage>
</organism>
<sequence>MRQFENVTIVKKANVYYEGKVTSRTVLFQDGSKKTLGILMPGQYDFGTDEKEIMEILDGDMLVKLPGEDSWKEIKGAQSFEVPAKSRFQMDVKKISDYCCSYIG</sequence>
<reference key="1">
    <citation type="journal article" date="2006" name="Proc. Natl. Acad. Sci. U.S.A.">
        <title>Genome reduction in Leptospira borgpetersenii reflects limited transmission potential.</title>
        <authorList>
            <person name="Bulach D.M."/>
            <person name="Zuerner R.L."/>
            <person name="Wilson P."/>
            <person name="Seemann T."/>
            <person name="McGrath A."/>
            <person name="Cullen P.A."/>
            <person name="Davis J."/>
            <person name="Johnson M."/>
            <person name="Kuczek E."/>
            <person name="Alt D.P."/>
            <person name="Peterson-Burch B."/>
            <person name="Coppel R.L."/>
            <person name="Rood J.I."/>
            <person name="Davies J.K."/>
            <person name="Adler B."/>
        </authorList>
    </citation>
    <scope>NUCLEOTIDE SEQUENCE [LARGE SCALE GENOMIC DNA]</scope>
    <source>
        <strain>L550</strain>
    </source>
</reference>
<feature type="chain" id="PRO_0000298699" description="Pyrimidine/purine nucleoside phosphorylase">
    <location>
        <begin position="1"/>
        <end position="104"/>
    </location>
</feature>